<feature type="transit peptide" description="Mitochondrion" evidence="2">
    <location>
        <begin position="1"/>
        <end position="26"/>
    </location>
</feature>
<feature type="chain" id="PRO_0000399723" description="Altered inheritance of mitochondria protein 36, mitochondrial">
    <location>
        <begin position="27"/>
        <end position="290"/>
    </location>
</feature>
<feature type="transmembrane region" description="Helical" evidence="2">
    <location>
        <begin position="55"/>
        <end position="74"/>
    </location>
</feature>
<evidence type="ECO:0000250" key="1"/>
<evidence type="ECO:0000255" key="2"/>
<evidence type="ECO:0000305" key="3"/>
<sequence>MFTRSLTRLQPQLFSRRLITSSRIPKYSSFLNQSPVNIIKRNYVIIHKQRKKEPVLRYLFYMIVLSWGFIYYVANRVDKKTVKKDFSEREFQQYEEATGVKRRNKLISGDLSSKYKFYVIPYINDNEQLDKIVNLLKSKDEGTHVKIIDPSELIEQQKQDEGLRYHYLLHDLEEQKRPYPQGLITALVKQEINNYSNTRQGTFETNFIIKNYPQTTAEAIKFENDVADVQKCLILHFDMLNELPKYKNEEEQRAIQNVDGYFDSVGRAKTLIDKFDPMDEEFEEIMMEDL</sequence>
<keyword id="KW-0472">Membrane</keyword>
<keyword id="KW-0496">Mitochondrion</keyword>
<keyword id="KW-1185">Reference proteome</keyword>
<keyword id="KW-0809">Transit peptide</keyword>
<keyword id="KW-0812">Transmembrane</keyword>
<keyword id="KW-1133">Transmembrane helix</keyword>
<protein>
    <recommendedName>
        <fullName>Altered inheritance of mitochondria protein 36, mitochondrial</fullName>
    </recommendedName>
    <alternativeName>
        <fullName>Found in mitochondria protein 39</fullName>
    </alternativeName>
</protein>
<organism>
    <name type="scientific">Candida tropicalis (strain ATCC MYA-3404 / T1)</name>
    <name type="common">Yeast</name>
    <dbReference type="NCBI Taxonomy" id="294747"/>
    <lineage>
        <taxon>Eukaryota</taxon>
        <taxon>Fungi</taxon>
        <taxon>Dikarya</taxon>
        <taxon>Ascomycota</taxon>
        <taxon>Saccharomycotina</taxon>
        <taxon>Pichiomycetes</taxon>
        <taxon>Debaryomycetaceae</taxon>
        <taxon>Candida/Lodderomyces clade</taxon>
        <taxon>Candida</taxon>
    </lineage>
</organism>
<reference key="1">
    <citation type="journal article" date="2009" name="Nature">
        <title>Evolution of pathogenicity and sexual reproduction in eight Candida genomes.</title>
        <authorList>
            <person name="Butler G."/>
            <person name="Rasmussen M.D."/>
            <person name="Lin M.F."/>
            <person name="Santos M.A.S."/>
            <person name="Sakthikumar S."/>
            <person name="Munro C.A."/>
            <person name="Rheinbay E."/>
            <person name="Grabherr M."/>
            <person name="Forche A."/>
            <person name="Reedy J.L."/>
            <person name="Agrafioti I."/>
            <person name="Arnaud M.B."/>
            <person name="Bates S."/>
            <person name="Brown A.J.P."/>
            <person name="Brunke S."/>
            <person name="Costanzo M.C."/>
            <person name="Fitzpatrick D.A."/>
            <person name="de Groot P.W.J."/>
            <person name="Harris D."/>
            <person name="Hoyer L.L."/>
            <person name="Hube B."/>
            <person name="Klis F.M."/>
            <person name="Kodira C."/>
            <person name="Lennard N."/>
            <person name="Logue M.E."/>
            <person name="Martin R."/>
            <person name="Neiman A.M."/>
            <person name="Nikolaou E."/>
            <person name="Quail M.A."/>
            <person name="Quinn J."/>
            <person name="Santos M.C."/>
            <person name="Schmitzberger F.F."/>
            <person name="Sherlock G."/>
            <person name="Shah P."/>
            <person name="Silverstein K.A.T."/>
            <person name="Skrzypek M.S."/>
            <person name="Soll D."/>
            <person name="Staggs R."/>
            <person name="Stansfield I."/>
            <person name="Stumpf M.P.H."/>
            <person name="Sudbery P.E."/>
            <person name="Srikantha T."/>
            <person name="Zeng Q."/>
            <person name="Berman J."/>
            <person name="Berriman M."/>
            <person name="Heitman J."/>
            <person name="Gow N.A.R."/>
            <person name="Lorenz M.C."/>
            <person name="Birren B.W."/>
            <person name="Kellis M."/>
            <person name="Cuomo C.A."/>
        </authorList>
    </citation>
    <scope>NUCLEOTIDE SEQUENCE [LARGE SCALE GENOMIC DNA]</scope>
    <source>
        <strain>ATCC MYA-3404 / T1</strain>
    </source>
</reference>
<accession>C5M696</accession>
<dbReference type="EMBL" id="GG692396">
    <property type="protein sequence ID" value="EER34516.1"/>
    <property type="molecule type" value="Genomic_DNA"/>
</dbReference>
<dbReference type="RefSeq" id="XP_002547071.1">
    <property type="nucleotide sequence ID" value="XM_002547025.1"/>
</dbReference>
<dbReference type="STRING" id="294747.C5M696"/>
<dbReference type="EnsemblFungi" id="CTRG_01377-t43_1">
    <property type="protein sequence ID" value="CTRG_01377-t43_1-p1"/>
    <property type="gene ID" value="CTRG_01377"/>
</dbReference>
<dbReference type="GeneID" id="8296438"/>
<dbReference type="KEGG" id="ctp:CTRG_01377"/>
<dbReference type="VEuPathDB" id="FungiDB:CTRG_01377"/>
<dbReference type="eggNOG" id="ENOG502SAUM">
    <property type="taxonomic scope" value="Eukaryota"/>
</dbReference>
<dbReference type="HOGENOM" id="CLU_997550_0_0_1"/>
<dbReference type="OrthoDB" id="4081130at2759"/>
<dbReference type="Proteomes" id="UP000002037">
    <property type="component" value="Unassembled WGS sequence"/>
</dbReference>
<dbReference type="GO" id="GO:0031966">
    <property type="term" value="C:mitochondrial membrane"/>
    <property type="evidence" value="ECO:0007669"/>
    <property type="project" value="UniProtKB-SubCell"/>
</dbReference>
<dbReference type="Gene3D" id="3.40.50.300">
    <property type="entry name" value="P-loop containing nucleotide triphosphate hydrolases"/>
    <property type="match status" value="1"/>
</dbReference>
<dbReference type="InterPro" id="IPR027417">
    <property type="entry name" value="P-loop_NTPase"/>
</dbReference>
<proteinExistence type="inferred from homology"/>
<comment type="subcellular location">
    <subcellularLocation>
        <location evidence="1">Mitochondrion membrane</location>
        <topology evidence="1">Single-pass membrane protein</topology>
    </subcellularLocation>
</comment>
<comment type="similarity">
    <text evidence="3">Belongs to the AIM36 family.</text>
</comment>
<name>AIM36_CANTT</name>
<gene>
    <name type="primary">AIM36</name>
    <name type="synonym">FMP39</name>
    <name type="ORF">CTRG_01377</name>
</gene>